<dbReference type="EC" id="2.1.2.3" evidence="1"/>
<dbReference type="EC" id="3.5.4.10" evidence="1"/>
<dbReference type="EMBL" id="CP001657">
    <property type="protein sequence ID" value="ACT11285.1"/>
    <property type="molecule type" value="Genomic_DNA"/>
</dbReference>
<dbReference type="SMR" id="C6DHT5"/>
<dbReference type="STRING" id="561230.PC1_0225"/>
<dbReference type="KEGG" id="pct:PC1_0225"/>
<dbReference type="eggNOG" id="COG0138">
    <property type="taxonomic scope" value="Bacteria"/>
</dbReference>
<dbReference type="HOGENOM" id="CLU_016316_5_2_6"/>
<dbReference type="OrthoDB" id="9802065at2"/>
<dbReference type="UniPathway" id="UPA00074">
    <property type="reaction ID" value="UER00133"/>
</dbReference>
<dbReference type="UniPathway" id="UPA00074">
    <property type="reaction ID" value="UER00135"/>
</dbReference>
<dbReference type="Proteomes" id="UP000002736">
    <property type="component" value="Chromosome"/>
</dbReference>
<dbReference type="GO" id="GO:0005829">
    <property type="term" value="C:cytosol"/>
    <property type="evidence" value="ECO:0007669"/>
    <property type="project" value="TreeGrafter"/>
</dbReference>
<dbReference type="GO" id="GO:0003937">
    <property type="term" value="F:IMP cyclohydrolase activity"/>
    <property type="evidence" value="ECO:0007669"/>
    <property type="project" value="UniProtKB-UniRule"/>
</dbReference>
<dbReference type="GO" id="GO:0004643">
    <property type="term" value="F:phosphoribosylaminoimidazolecarboxamide formyltransferase activity"/>
    <property type="evidence" value="ECO:0007669"/>
    <property type="project" value="UniProtKB-UniRule"/>
</dbReference>
<dbReference type="GO" id="GO:0006189">
    <property type="term" value="P:'de novo' IMP biosynthetic process"/>
    <property type="evidence" value="ECO:0007669"/>
    <property type="project" value="UniProtKB-UniRule"/>
</dbReference>
<dbReference type="CDD" id="cd01421">
    <property type="entry name" value="IMPCH"/>
    <property type="match status" value="1"/>
</dbReference>
<dbReference type="FunFam" id="3.40.140.20:FF:000001">
    <property type="entry name" value="Bifunctional purine biosynthesis protein PurH"/>
    <property type="match status" value="1"/>
</dbReference>
<dbReference type="FunFam" id="3.40.140.20:FF:000002">
    <property type="entry name" value="Bifunctional purine biosynthesis protein PurH"/>
    <property type="match status" value="1"/>
</dbReference>
<dbReference type="FunFam" id="3.40.50.1380:FF:000001">
    <property type="entry name" value="Bifunctional purine biosynthesis protein PurH"/>
    <property type="match status" value="1"/>
</dbReference>
<dbReference type="Gene3D" id="3.40.140.20">
    <property type="match status" value="2"/>
</dbReference>
<dbReference type="Gene3D" id="3.40.50.1380">
    <property type="entry name" value="Methylglyoxal synthase-like domain"/>
    <property type="match status" value="1"/>
</dbReference>
<dbReference type="HAMAP" id="MF_00139">
    <property type="entry name" value="PurH"/>
    <property type="match status" value="1"/>
</dbReference>
<dbReference type="InterPro" id="IPR024051">
    <property type="entry name" value="AICAR_Tfase_dup_dom_sf"/>
</dbReference>
<dbReference type="InterPro" id="IPR016193">
    <property type="entry name" value="Cytidine_deaminase-like"/>
</dbReference>
<dbReference type="InterPro" id="IPR011607">
    <property type="entry name" value="MGS-like_dom"/>
</dbReference>
<dbReference type="InterPro" id="IPR036914">
    <property type="entry name" value="MGS-like_dom_sf"/>
</dbReference>
<dbReference type="InterPro" id="IPR002695">
    <property type="entry name" value="PurH-like"/>
</dbReference>
<dbReference type="NCBIfam" id="NF002049">
    <property type="entry name" value="PRK00881.1"/>
    <property type="match status" value="1"/>
</dbReference>
<dbReference type="NCBIfam" id="TIGR00355">
    <property type="entry name" value="purH"/>
    <property type="match status" value="1"/>
</dbReference>
<dbReference type="PANTHER" id="PTHR11692:SF0">
    <property type="entry name" value="BIFUNCTIONAL PURINE BIOSYNTHESIS PROTEIN ATIC"/>
    <property type="match status" value="1"/>
</dbReference>
<dbReference type="PANTHER" id="PTHR11692">
    <property type="entry name" value="BIFUNCTIONAL PURINE BIOSYNTHESIS PROTEIN PURH"/>
    <property type="match status" value="1"/>
</dbReference>
<dbReference type="Pfam" id="PF01808">
    <property type="entry name" value="AICARFT_IMPCHas"/>
    <property type="match status" value="1"/>
</dbReference>
<dbReference type="Pfam" id="PF02142">
    <property type="entry name" value="MGS"/>
    <property type="match status" value="1"/>
</dbReference>
<dbReference type="PIRSF" id="PIRSF000414">
    <property type="entry name" value="AICARFT_IMPCHas"/>
    <property type="match status" value="1"/>
</dbReference>
<dbReference type="SMART" id="SM00798">
    <property type="entry name" value="AICARFT_IMPCHas"/>
    <property type="match status" value="1"/>
</dbReference>
<dbReference type="SMART" id="SM00851">
    <property type="entry name" value="MGS"/>
    <property type="match status" value="1"/>
</dbReference>
<dbReference type="SUPFAM" id="SSF53927">
    <property type="entry name" value="Cytidine deaminase-like"/>
    <property type="match status" value="1"/>
</dbReference>
<dbReference type="SUPFAM" id="SSF52335">
    <property type="entry name" value="Methylglyoxal synthase-like"/>
    <property type="match status" value="1"/>
</dbReference>
<dbReference type="PROSITE" id="PS51855">
    <property type="entry name" value="MGS"/>
    <property type="match status" value="1"/>
</dbReference>
<gene>
    <name evidence="1" type="primary">purH</name>
    <name type="ordered locus">PC1_0225</name>
</gene>
<accession>C6DHT5</accession>
<name>PUR9_PECCP</name>
<sequence>MQQRRPIRRALLSVSDKAGIVEFAQALSHRGVELLSTGGTARLLADAGLAVTEVSDYTGFPEMMDGRVKTLHPKVHGGILGRRDQDDAIMAQHDIKPIDIVVVNLYPFAQTVARENCTLEDAVENIDIGGPTMVRSAAKNHKDVAIVVKSSDYSAIINEIDANEGSLTYETRFDLAIKAFEHTAAYDSMIANYFGALVPPYHGETDKPSGNFPRTLNLNYIKKQDMRYGENSHQQAAFYIEENIHEASVATSTQLQGKALSYNNIADTDAALECVKEFAEPACVIVKHANPSGVAIGGSILDAYERAYKTDPTSAFGGIIAFNRELDEETAQAIISRQFVEVIIAPSASEAALKVTAAKQNVRVLTSGNWQQRVPGLDFKRVNGGLLIQDRDLGMVDASQLRVVTERQPSEQELRDALFCWKVAKFVKSNAIVYARDNMTIGIGAGQMSRVYSAKIAGIKAGDEGLEVKGSAMASDAFFPFRDGIDAAAAVGITCVIQPGGSIRDDEVIAAANEHGIAMIFTDMRHFRH</sequence>
<proteinExistence type="inferred from homology"/>
<protein>
    <recommendedName>
        <fullName evidence="1">Bifunctional purine biosynthesis protein PurH</fullName>
    </recommendedName>
    <domain>
        <recommendedName>
            <fullName evidence="1">Phosphoribosylaminoimidazolecarboxamide formyltransferase</fullName>
            <ecNumber evidence="1">2.1.2.3</ecNumber>
        </recommendedName>
        <alternativeName>
            <fullName evidence="1">AICAR transformylase</fullName>
        </alternativeName>
    </domain>
    <domain>
        <recommendedName>
            <fullName evidence="1">IMP cyclohydrolase</fullName>
            <ecNumber evidence="1">3.5.4.10</ecNumber>
        </recommendedName>
        <alternativeName>
            <fullName evidence="1">ATIC</fullName>
        </alternativeName>
        <alternativeName>
            <fullName evidence="1">IMP synthase</fullName>
        </alternativeName>
        <alternativeName>
            <fullName evidence="1">Inosinicase</fullName>
        </alternativeName>
    </domain>
</protein>
<keyword id="KW-0378">Hydrolase</keyword>
<keyword id="KW-0511">Multifunctional enzyme</keyword>
<keyword id="KW-0658">Purine biosynthesis</keyword>
<keyword id="KW-0808">Transferase</keyword>
<feature type="chain" id="PRO_1000203252" description="Bifunctional purine biosynthesis protein PurH">
    <location>
        <begin position="1"/>
        <end position="529"/>
    </location>
</feature>
<feature type="domain" description="MGS-like" evidence="2">
    <location>
        <begin position="1"/>
        <end position="148"/>
    </location>
</feature>
<evidence type="ECO:0000255" key="1">
    <source>
        <dbReference type="HAMAP-Rule" id="MF_00139"/>
    </source>
</evidence>
<evidence type="ECO:0000255" key="2">
    <source>
        <dbReference type="PROSITE-ProRule" id="PRU01202"/>
    </source>
</evidence>
<comment type="catalytic activity">
    <reaction evidence="1">
        <text>(6R)-10-formyltetrahydrofolate + 5-amino-1-(5-phospho-beta-D-ribosyl)imidazole-4-carboxamide = 5-formamido-1-(5-phospho-D-ribosyl)imidazole-4-carboxamide + (6S)-5,6,7,8-tetrahydrofolate</text>
        <dbReference type="Rhea" id="RHEA:22192"/>
        <dbReference type="ChEBI" id="CHEBI:57453"/>
        <dbReference type="ChEBI" id="CHEBI:58467"/>
        <dbReference type="ChEBI" id="CHEBI:58475"/>
        <dbReference type="ChEBI" id="CHEBI:195366"/>
        <dbReference type="EC" id="2.1.2.3"/>
    </reaction>
</comment>
<comment type="catalytic activity">
    <reaction evidence="1">
        <text>IMP + H2O = 5-formamido-1-(5-phospho-D-ribosyl)imidazole-4-carboxamide</text>
        <dbReference type="Rhea" id="RHEA:18445"/>
        <dbReference type="ChEBI" id="CHEBI:15377"/>
        <dbReference type="ChEBI" id="CHEBI:58053"/>
        <dbReference type="ChEBI" id="CHEBI:58467"/>
        <dbReference type="EC" id="3.5.4.10"/>
    </reaction>
</comment>
<comment type="pathway">
    <text evidence="1">Purine metabolism; IMP biosynthesis via de novo pathway; 5-formamido-1-(5-phospho-D-ribosyl)imidazole-4-carboxamide from 5-amino-1-(5-phospho-D-ribosyl)imidazole-4-carboxamide (10-formyl THF route): step 1/1.</text>
</comment>
<comment type="pathway">
    <text evidence="1">Purine metabolism; IMP biosynthesis via de novo pathway; IMP from 5-formamido-1-(5-phospho-D-ribosyl)imidazole-4-carboxamide: step 1/1.</text>
</comment>
<comment type="domain">
    <text evidence="1">The IMP cyclohydrolase activity resides in the N-terminal region.</text>
</comment>
<comment type="similarity">
    <text evidence="1">Belongs to the PurH family.</text>
</comment>
<organism>
    <name type="scientific">Pectobacterium carotovorum subsp. carotovorum (strain PC1)</name>
    <dbReference type="NCBI Taxonomy" id="561230"/>
    <lineage>
        <taxon>Bacteria</taxon>
        <taxon>Pseudomonadati</taxon>
        <taxon>Pseudomonadota</taxon>
        <taxon>Gammaproteobacteria</taxon>
        <taxon>Enterobacterales</taxon>
        <taxon>Pectobacteriaceae</taxon>
        <taxon>Pectobacterium</taxon>
    </lineage>
</organism>
<reference key="1">
    <citation type="submission" date="2009-07" db="EMBL/GenBank/DDBJ databases">
        <title>Complete sequence of Pectobacterium carotovorum subsp. carotovorum PC1.</title>
        <authorList>
            <consortium name="US DOE Joint Genome Institute"/>
            <person name="Lucas S."/>
            <person name="Copeland A."/>
            <person name="Lapidus A."/>
            <person name="Glavina del Rio T."/>
            <person name="Tice H."/>
            <person name="Bruce D."/>
            <person name="Goodwin L."/>
            <person name="Pitluck S."/>
            <person name="Munk A.C."/>
            <person name="Brettin T."/>
            <person name="Detter J.C."/>
            <person name="Han C."/>
            <person name="Tapia R."/>
            <person name="Larimer F."/>
            <person name="Land M."/>
            <person name="Hauser L."/>
            <person name="Kyrpides N."/>
            <person name="Mikhailova N."/>
            <person name="Balakrishnan V."/>
            <person name="Glasner J."/>
            <person name="Perna N.T."/>
        </authorList>
    </citation>
    <scope>NUCLEOTIDE SEQUENCE [LARGE SCALE GENOMIC DNA]</scope>
    <source>
        <strain>PC1</strain>
    </source>
</reference>